<comment type="function">
    <text evidence="1 2 4">Late protein responsible for processing most or all of the viral core and membrane proteins known to undergo morphogenesis-associated proteolysis. These proteolytic events are involved in the transformation of immature virions (IV) into mature virions (MV). Probably cleaves at least the OPG129/A3, OPG136/A10, OPG098/L4, and OPG144/A17 precursors preferentially at Ala-Gly-|-Ala motifs. Also seems to process Ala-Gly-|-Ser and Ala-Gly-|-Thr motifs (By similarity).</text>
</comment>
<comment type="subcellular location">
    <subcellularLocation>
        <location>Virion</location>
    </subcellularLocation>
    <text>Present in the virion core.</text>
</comment>
<comment type="induction">
    <text evidence="5">Expressed in the late phase of the viral replicative cycle.</text>
</comment>
<comment type="similarity">
    <text evidence="6">Belongs to the peptidase C57 family.</text>
</comment>
<keyword id="KW-0378">Hydrolase</keyword>
<keyword id="KW-0645">Protease</keyword>
<keyword id="KW-1185">Reference proteome</keyword>
<keyword id="KW-0788">Thiol protease</keyword>
<keyword id="KW-0946">Virion</keyword>
<sequence>MERYTDLVISKIPELGFTNLLCHIYSLAGLCSNIDVSKFLTNCNGYVVEKYDKSTTAGKVSCIPIGMMLELVESGHLSRPNSSDELDQKKELTDELKTRYHSIYDVFELPTSIPLAYFFKPRLREKVSKAIDFSQMDLKIDDLSRKGIHTGENPKVVKMKIEPERGAWMSNRSIKNLVSQFAYGSEVDYIGQFDMRFLNSLAIHEKFDAFMNKHILSYILKDKIKSSTSRFVMFGFCYLSHWKCVIYDKKQCLVSFYDSGGNIPTEFHHYNNFYFYSFSDGFNTNHKHSVLDNTNCDIDVLFRFFECTFGAKIGCINVEVNQLLESECGMFISLFMILCTRTPPKSFKSLKKVYTFFKFLADKKMTLFKSILFNLHDLSLDITETDNAGLKEYKRMEKWTKKSINVICDKLTTKLNRIVNDDE</sequence>
<feature type="chain" id="PRO_0000099583" description="Core protease OPG083">
    <location>
        <begin position="1"/>
        <end position="423"/>
    </location>
</feature>
<feature type="active site" evidence="2">
    <location>
        <position position="241"/>
    </location>
</feature>
<feature type="active site" evidence="2">
    <location>
        <position position="248"/>
    </location>
</feature>
<feature type="active site" evidence="2">
    <location>
        <position position="328"/>
    </location>
</feature>
<feature type="mutagenesis site" description="Loss of cleavage of A10, A3, A17 and L4." evidence="3 4">
    <original>H</original>
    <variation>A</variation>
    <location>
        <position position="241"/>
    </location>
</feature>
<feature type="mutagenesis site" description="Loss of cleavage of A10, A3, and L4." evidence="3">
    <original>W</original>
    <variation>A</variation>
    <location>
        <position position="242"/>
    </location>
</feature>
<feature type="mutagenesis site" description="Loss of cleavage of A10, A3, and L4." evidence="3">
    <original>D</original>
    <variation>A</variation>
    <location>
        <position position="248"/>
    </location>
</feature>
<feature type="mutagenesis site" description="No effect on cleavage of A3L, and L4. Loss of cleavage of A10L." evidence="3">
    <original>D</original>
    <variation>A</variation>
    <location>
        <position position="258"/>
    </location>
</feature>
<feature type="mutagenesis site" description="Loss of cleavage of A10, A3, and L4." evidence="3">
    <original>Q</original>
    <variation>A</variation>
    <location>
        <position position="322"/>
    </location>
</feature>
<feature type="mutagenesis site" description="Loss of cleavage of A10, A3, A17 and L4." evidence="3 4">
    <original>C</original>
    <variation>A</variation>
    <location>
        <position position="328"/>
    </location>
</feature>
<feature type="mutagenesis site" description="Loss of cleavage of A10, A3, and L4." evidence="3">
    <original>G</original>
    <variation>A</variation>
    <location>
        <position position="329"/>
    </location>
</feature>
<feature type="sequence conflict" description="In Ref. 4; AAR88657." evidence="6" ref="4">
    <original>N</original>
    <variation>D</variation>
    <location>
        <position position="420"/>
    </location>
</feature>
<dbReference type="EC" id="3.4.22.-"/>
<dbReference type="EMBL" id="J03399">
    <property type="protein sequence ID" value="AAB59809.1"/>
    <property type="molecule type" value="Genomic_DNA"/>
</dbReference>
<dbReference type="EMBL" id="AY243312">
    <property type="protein sequence ID" value="AAO89355.1"/>
    <property type="molecule type" value="Genomic_DNA"/>
</dbReference>
<dbReference type="EMBL" id="AY497361">
    <property type="protein sequence ID" value="AAR88657.1"/>
    <property type="molecule type" value="Genomic_DNA"/>
</dbReference>
<dbReference type="PIR" id="G29889">
    <property type="entry name" value="WZVZI7"/>
</dbReference>
<dbReference type="RefSeq" id="YP_232958.1">
    <property type="nucleotide sequence ID" value="NC_006998.1"/>
</dbReference>
<dbReference type="MEROPS" id="C57.001"/>
<dbReference type="DNASU" id="3707609"/>
<dbReference type="GeneID" id="3707609"/>
<dbReference type="KEGG" id="vg:3707609"/>
<dbReference type="Proteomes" id="UP000000344">
    <property type="component" value="Genome"/>
</dbReference>
<dbReference type="GO" id="GO:0044423">
    <property type="term" value="C:virion component"/>
    <property type="evidence" value="ECO:0007669"/>
    <property type="project" value="UniProtKB-KW"/>
</dbReference>
<dbReference type="GO" id="GO:0008234">
    <property type="term" value="F:cysteine-type peptidase activity"/>
    <property type="evidence" value="ECO:0007669"/>
    <property type="project" value="UniProtKB-KW"/>
</dbReference>
<dbReference type="GO" id="GO:0006508">
    <property type="term" value="P:proteolysis"/>
    <property type="evidence" value="ECO:0007669"/>
    <property type="project" value="UniProtKB-KW"/>
</dbReference>
<dbReference type="InterPro" id="IPR038765">
    <property type="entry name" value="Papain-like_cys_pep_sf"/>
</dbReference>
<dbReference type="InterPro" id="IPR004970">
    <property type="entry name" value="Peptidase_C57"/>
</dbReference>
<dbReference type="Pfam" id="PF03290">
    <property type="entry name" value="Peptidase_C57"/>
    <property type="match status" value="1"/>
</dbReference>
<dbReference type="SUPFAM" id="SSF54001">
    <property type="entry name" value="Cysteine proteinases"/>
    <property type="match status" value="1"/>
</dbReference>
<gene>
    <name type="primary">OPG083</name>
    <name type="ordered locus">VACWR076</name>
    <name type="ORF">I7L</name>
</gene>
<evidence type="ECO:0000250" key="1"/>
<evidence type="ECO:0000269" key="2">
    <source>
    </source>
</evidence>
<evidence type="ECO:0000269" key="3">
    <source>
    </source>
</evidence>
<evidence type="ECO:0000269" key="4">
    <source>
    </source>
</evidence>
<evidence type="ECO:0000269" key="5">
    <source>
    </source>
</evidence>
<evidence type="ECO:0000305" key="6"/>
<organismHost>
    <name type="scientific">Bos taurus</name>
    <name type="common">Bovine</name>
    <dbReference type="NCBI Taxonomy" id="9913"/>
</organismHost>
<proteinExistence type="evidence at protein level"/>
<protein>
    <recommendedName>
        <fullName>Core protease OPG083</fullName>
        <ecNumber>3.4.22.-</ecNumber>
    </recommendedName>
    <alternativeName>
        <fullName>Core protease I7</fullName>
    </alternativeName>
</protein>
<accession>P12926</accession>
<accession>Q6RHZ8</accession>
<accession>Q76ZU6</accession>
<organism>
    <name type="scientific">Vaccinia virus (strain Western Reserve)</name>
    <name type="common">VACV</name>
    <name type="synonym">Vaccinia virus (strain WR)</name>
    <dbReference type="NCBI Taxonomy" id="10254"/>
    <lineage>
        <taxon>Viruses</taxon>
        <taxon>Varidnaviria</taxon>
        <taxon>Bamfordvirae</taxon>
        <taxon>Nucleocytoviricota</taxon>
        <taxon>Pokkesviricetes</taxon>
        <taxon>Chitovirales</taxon>
        <taxon>Poxviridae</taxon>
        <taxon>Chordopoxvirinae</taxon>
        <taxon>Orthopoxvirus</taxon>
        <taxon>Vaccinia virus</taxon>
    </lineage>
</organism>
<name>PG083_VACCW</name>
<reference key="1">
    <citation type="journal article" date="1988" name="J. Virol.">
        <title>Sequence and transcriptional analysis of the vaccinia virus HindIII I fragment.</title>
        <authorList>
            <person name="Schmitt J.F.C."/>
            <person name="Stunnenberg H.G."/>
        </authorList>
    </citation>
    <scope>NUCLEOTIDE SEQUENCE [GENOMIC DNA]</scope>
    <scope>INDUCTION</scope>
</reference>
<reference key="2">
    <citation type="journal article" date="1991" name="Virology">
        <title>Genetic and molecular biological characterization of a vaccinia virus temperature-sensitive complementation group affecting a virion component.</title>
        <authorList>
            <person name="Fathi Z."/>
            <person name="Condit R.C."/>
        </authorList>
    </citation>
    <scope>NUCLEOTIDE SEQUENCE [GENOMIC DNA] OF 1-215</scope>
</reference>
<reference key="3">
    <citation type="submission" date="2003-02" db="EMBL/GenBank/DDBJ databases">
        <title>Sequencing of the coding region of Vaccinia-WR to an average 9-fold redundancy and an error rate of 0.16/10kb.</title>
        <authorList>
            <person name="Esposito J.J."/>
            <person name="Frace A.M."/>
            <person name="Sammons S.A."/>
            <person name="Olsen-Rasmussen M."/>
            <person name="Osborne J."/>
            <person name="Wohlhueter R."/>
        </authorList>
    </citation>
    <scope>NUCLEOTIDE SEQUENCE [LARGE SCALE GENOMIC DNA]</scope>
</reference>
<reference key="4">
    <citation type="submission" date="2003-12" db="EMBL/GenBank/DDBJ databases">
        <title>Vaccinia virus strain WR cysteine proteinase I7L.</title>
        <authorList>
            <person name="Rozanov D.V."/>
            <person name="Strongin A.Y."/>
        </authorList>
    </citation>
    <scope>NUCLEOTIDE SEQUENCE [GENOMIC DNA]</scope>
</reference>
<reference key="5">
    <citation type="journal article" date="2002" name="J. Virol.">
        <title>The vaccinia virus I7L gene product is the core protein proteinase.</title>
        <authorList>
            <person name="Byrd C.M."/>
            <person name="Bolken T.C."/>
            <person name="Hruby D.E."/>
        </authorList>
    </citation>
    <scope>FUNCTION</scope>
    <scope>ACTIVE SITES</scope>
</reference>
<reference key="6">
    <citation type="journal article" date="2003" name="J. Virol.">
        <title>Molecular dissection of the vaccinia virus I7L core protein proteinase.</title>
        <authorList>
            <person name="Byrd C.M."/>
            <person name="Bolken T.C."/>
            <person name="Hruby D.E."/>
        </authorList>
    </citation>
    <scope>CHARACTERIZATION</scope>
    <scope>MUTAGENESIS OF HIS-241; TRP-242; ASP-248; ASP-258; GLN-322; CYS-328 AND GLY-329</scope>
</reference>
<reference key="7">
    <citation type="journal article" date="2004" name="J. Virol.">
        <title>Role of the I7 protein in proteolytic processing of vaccinia virus membrane and core components.</title>
        <authorList>
            <person name="Ansarah-Sobrinho C."/>
            <person name="Moss B."/>
        </authorList>
    </citation>
    <scope>FUNCTION</scope>
    <scope>MUTAGENESIS OF HIS-241 AND CYS-328</scope>
</reference>
<reference key="8">
    <citation type="journal article" date="2015" name="J. Virol.">
        <title>Deciphering poxvirus gene expression by RNA sequencing and ribosome profiling.</title>
        <authorList>
            <person name="Yang Z."/>
            <person name="Cao S."/>
            <person name="Martens C.A."/>
            <person name="Porcella S.F."/>
            <person name="Xie Z."/>
            <person name="Ma M."/>
            <person name="Shen B."/>
            <person name="Moss B."/>
        </authorList>
    </citation>
    <scope>INDUCTION</scope>
</reference>